<proteinExistence type="evidence at protein level"/>
<gene>
    <name evidence="30" type="primary">ADPRS</name>
    <name type="synonym">ADPRHL2</name>
    <name evidence="27" type="synonym">ARH3</name>
</gene>
<protein>
    <recommendedName>
        <fullName evidence="28">ADP-ribosylhydrolase ARH3</fullName>
    </recommendedName>
    <alternativeName>
        <fullName evidence="28">ADP-ribose glycohydrolase ARH3</fullName>
    </alternativeName>
    <alternativeName>
        <fullName evidence="27">ADP-ribosylhydrolase 3</fullName>
    </alternativeName>
    <alternativeName>
        <fullName evidence="28">O-acetyl-ADP-ribose deacetylase ARH3</fullName>
        <ecNumber evidence="4 7">3.5.1.-</ecNumber>
    </alternativeName>
    <alternativeName>
        <fullName evidence="28">Poly(ADP-ribose) glycohydrolase ARH3</fullName>
        <ecNumber evidence="1 4 9">3.2.1.143</ecNumber>
    </alternativeName>
    <alternativeName>
        <fullName evidence="28">[Protein ADP-ribosylarginine] hydrolase-like protein 2</fullName>
    </alternativeName>
    <alternativeName>
        <fullName evidence="28">[Protein ADP-ribosylserine] hydrolase</fullName>
        <ecNumber evidence="10 11 25">3.2.2.-</ecNumber>
    </alternativeName>
</protein>
<keyword id="KW-0002">3D-structure</keyword>
<keyword id="KW-0158">Chromosome</keyword>
<keyword id="KW-0963">Cytoplasm</keyword>
<keyword id="KW-0225">Disease variant</keyword>
<keyword id="KW-0227">DNA damage</keyword>
<keyword id="KW-0234">DNA repair</keyword>
<keyword id="KW-0378">Hydrolase</keyword>
<keyword id="KW-0460">Magnesium</keyword>
<keyword id="KW-0479">Metal-binding</keyword>
<keyword id="KW-0496">Mitochondrion</keyword>
<keyword id="KW-0523">Neurodegeneration</keyword>
<keyword id="KW-0539">Nucleus</keyword>
<keyword id="KW-0597">Phosphoprotein</keyword>
<keyword id="KW-1267">Proteomics identification</keyword>
<keyword id="KW-1185">Reference proteome</keyword>
<evidence type="ECO:0000269" key="1">
    <source>
    </source>
</evidence>
<evidence type="ECO:0000269" key="2">
    <source>
    </source>
</evidence>
<evidence type="ECO:0000269" key="3">
    <source>
    </source>
</evidence>
<evidence type="ECO:0000269" key="4">
    <source>
    </source>
</evidence>
<evidence type="ECO:0000269" key="5">
    <source>
    </source>
</evidence>
<evidence type="ECO:0000269" key="6">
    <source>
    </source>
</evidence>
<evidence type="ECO:0000269" key="7">
    <source>
    </source>
</evidence>
<evidence type="ECO:0000269" key="8">
    <source>
    </source>
</evidence>
<evidence type="ECO:0000269" key="9">
    <source>
    </source>
</evidence>
<evidence type="ECO:0000269" key="10">
    <source>
    </source>
</evidence>
<evidence type="ECO:0000269" key="11">
    <source>
    </source>
</evidence>
<evidence type="ECO:0000269" key="12">
    <source>
    </source>
</evidence>
<evidence type="ECO:0000269" key="13">
    <source>
    </source>
</evidence>
<evidence type="ECO:0000269" key="14">
    <source>
    </source>
</evidence>
<evidence type="ECO:0000269" key="15">
    <source>
    </source>
</evidence>
<evidence type="ECO:0000269" key="16">
    <source>
    </source>
</evidence>
<evidence type="ECO:0000269" key="17">
    <source>
    </source>
</evidence>
<evidence type="ECO:0000269" key="18">
    <source>
    </source>
</evidence>
<evidence type="ECO:0000269" key="19">
    <source>
    </source>
</evidence>
<evidence type="ECO:0000269" key="20">
    <source>
    </source>
</evidence>
<evidence type="ECO:0000269" key="21">
    <source>
    </source>
</evidence>
<evidence type="ECO:0000269" key="22">
    <source>
    </source>
</evidence>
<evidence type="ECO:0000269" key="23">
    <source>
    </source>
</evidence>
<evidence type="ECO:0000269" key="24">
    <source>
    </source>
</evidence>
<evidence type="ECO:0000269" key="25">
    <source>
    </source>
</evidence>
<evidence type="ECO:0000269" key="26">
    <source ref="5"/>
</evidence>
<evidence type="ECO:0000303" key="27">
    <source>
    </source>
</evidence>
<evidence type="ECO:0000305" key="28"/>
<evidence type="ECO:0000305" key="29">
    <source>
    </source>
</evidence>
<evidence type="ECO:0000312" key="30">
    <source>
        <dbReference type="HGNC" id="HGNC:21304"/>
    </source>
</evidence>
<evidence type="ECO:0007744" key="31">
    <source>
        <dbReference type="PDB" id="2G4K"/>
    </source>
</evidence>
<evidence type="ECO:0007744" key="32">
    <source>
        <dbReference type="PDB" id="5ZQY"/>
    </source>
</evidence>
<evidence type="ECO:0007744" key="33">
    <source>
        <dbReference type="PDB" id="6D36"/>
    </source>
</evidence>
<evidence type="ECO:0007744" key="34">
    <source>
        <dbReference type="PDB" id="6D3A"/>
    </source>
</evidence>
<evidence type="ECO:0007744" key="35">
    <source>
        <dbReference type="PDB" id="7AKR"/>
    </source>
</evidence>
<evidence type="ECO:0007744" key="36">
    <source>
        <dbReference type="PDB" id="7AKS"/>
    </source>
</evidence>
<evidence type="ECO:0007744" key="37">
    <source>
        <dbReference type="PDB" id="7ARW"/>
    </source>
</evidence>
<evidence type="ECO:0007744" key="38">
    <source>
        <dbReference type="PDB" id="7L9F"/>
    </source>
</evidence>
<evidence type="ECO:0007744" key="39">
    <source>
        <dbReference type="PDB" id="7L9H"/>
    </source>
</evidence>
<evidence type="ECO:0007744" key="40">
    <source>
        <dbReference type="PDB" id="7L9I"/>
    </source>
</evidence>
<evidence type="ECO:0007744" key="41">
    <source>
    </source>
</evidence>
<evidence type="ECO:0007829" key="42">
    <source>
        <dbReference type="PDB" id="2FOZ"/>
    </source>
</evidence>
<evidence type="ECO:0007829" key="43">
    <source>
        <dbReference type="PDB" id="5ZQY"/>
    </source>
</evidence>
<evidence type="ECO:0007829" key="44">
    <source>
        <dbReference type="PDB" id="6D3A"/>
    </source>
</evidence>
<evidence type="ECO:0007829" key="45">
    <source>
        <dbReference type="PDB" id="7ARW"/>
    </source>
</evidence>
<name>ADPRS_HUMAN</name>
<dbReference type="EC" id="3.5.1.-" evidence="4 7"/>
<dbReference type="EC" id="3.2.1.143" evidence="1 4 9"/>
<dbReference type="EC" id="3.2.2.-" evidence="10 11 25"/>
<dbReference type="EMBL" id="AJ313333">
    <property type="protein sequence ID" value="CAC85940.1"/>
    <property type="molecule type" value="Genomic_DNA"/>
</dbReference>
<dbReference type="EMBL" id="AJ427295">
    <property type="protein sequence ID" value="CAD20316.1"/>
    <property type="molecule type" value="mRNA"/>
</dbReference>
<dbReference type="EMBL" id="AF212236">
    <property type="protein sequence ID" value="AAK14922.1"/>
    <property type="status" value="ALT_FRAME"/>
    <property type="molecule type" value="mRNA"/>
</dbReference>
<dbReference type="EMBL" id="AK000453">
    <property type="protein sequence ID" value="BAA91174.1"/>
    <property type="molecule type" value="mRNA"/>
</dbReference>
<dbReference type="EMBL" id="CR457237">
    <property type="protein sequence ID" value="CAG33518.1"/>
    <property type="molecule type" value="mRNA"/>
</dbReference>
<dbReference type="EMBL" id="AK223037">
    <property type="protein sequence ID" value="BAD96757.1"/>
    <property type="molecule type" value="mRNA"/>
</dbReference>
<dbReference type="EMBL" id="AL138787">
    <property type="status" value="NOT_ANNOTATED_CDS"/>
    <property type="molecule type" value="Genomic_DNA"/>
</dbReference>
<dbReference type="EMBL" id="BC014169">
    <property type="protein sequence ID" value="AAH14169.1"/>
    <property type="molecule type" value="mRNA"/>
</dbReference>
<dbReference type="CCDS" id="CCDS402.1"/>
<dbReference type="RefSeq" id="NP_060295.1">
    <property type="nucleotide sequence ID" value="NM_017825.3"/>
</dbReference>
<dbReference type="PDB" id="2FOZ">
    <property type="method" value="X-ray"/>
    <property type="resolution" value="1.60 A"/>
    <property type="chains" value="A=19-363"/>
</dbReference>
<dbReference type="PDB" id="2FP0">
    <property type="method" value="X-ray"/>
    <property type="resolution" value="2.05 A"/>
    <property type="chains" value="A/B=19-363"/>
</dbReference>
<dbReference type="PDB" id="2G4K">
    <property type="method" value="X-ray"/>
    <property type="resolution" value="1.82 A"/>
    <property type="chains" value="A=18-363"/>
</dbReference>
<dbReference type="PDB" id="5ZQY">
    <property type="method" value="X-ray"/>
    <property type="resolution" value="1.58 A"/>
    <property type="chains" value="A=19-363"/>
</dbReference>
<dbReference type="PDB" id="6D36">
    <property type="method" value="X-ray"/>
    <property type="resolution" value="1.70 A"/>
    <property type="chains" value="A/B/C/D=1-363"/>
</dbReference>
<dbReference type="PDB" id="6D3A">
    <property type="method" value="X-ray"/>
    <property type="resolution" value="1.60 A"/>
    <property type="chains" value="A/B/C/D=1-363"/>
</dbReference>
<dbReference type="PDB" id="7AKR">
    <property type="method" value="X-ray"/>
    <property type="resolution" value="1.95 A"/>
    <property type="chains" value="AAA/BBB/CCC/DDD=19-363"/>
</dbReference>
<dbReference type="PDB" id="7AKS">
    <property type="method" value="X-ray"/>
    <property type="resolution" value="1.86 A"/>
    <property type="chains" value="AAA/CCC/EEE/GGG=19-363"/>
</dbReference>
<dbReference type="PDB" id="7ARW">
    <property type="method" value="X-ray"/>
    <property type="resolution" value="1.31 A"/>
    <property type="chains" value="A/B=19-363"/>
</dbReference>
<dbReference type="PDB" id="7L9F">
    <property type="method" value="X-ray"/>
    <property type="resolution" value="1.75 A"/>
    <property type="chains" value="A/B/C/D=1-363"/>
</dbReference>
<dbReference type="PDB" id="7L9H">
    <property type="method" value="X-ray"/>
    <property type="resolution" value="1.85 A"/>
    <property type="chains" value="A/B/C/D=1-363"/>
</dbReference>
<dbReference type="PDB" id="7L9I">
    <property type="method" value="X-ray"/>
    <property type="resolution" value="1.80 A"/>
    <property type="chains" value="A/B/C/D=1-363"/>
</dbReference>
<dbReference type="PDBsum" id="2FOZ"/>
<dbReference type="PDBsum" id="2FP0"/>
<dbReference type="PDBsum" id="2G4K"/>
<dbReference type="PDBsum" id="5ZQY"/>
<dbReference type="PDBsum" id="6D36"/>
<dbReference type="PDBsum" id="6D3A"/>
<dbReference type="PDBsum" id="7AKR"/>
<dbReference type="PDBsum" id="7AKS"/>
<dbReference type="PDBsum" id="7ARW"/>
<dbReference type="PDBsum" id="7L9F"/>
<dbReference type="PDBsum" id="7L9H"/>
<dbReference type="PDBsum" id="7L9I"/>
<dbReference type="SMR" id="Q9NX46"/>
<dbReference type="BioGRID" id="120276">
    <property type="interactions" value="41"/>
</dbReference>
<dbReference type="FunCoup" id="Q9NX46">
    <property type="interactions" value="3240"/>
</dbReference>
<dbReference type="IntAct" id="Q9NX46">
    <property type="interactions" value="15"/>
</dbReference>
<dbReference type="STRING" id="9606.ENSP00000362273"/>
<dbReference type="BindingDB" id="Q9NX46"/>
<dbReference type="ChEMBL" id="CHEMBL4295963"/>
<dbReference type="GlyGen" id="Q9NX46">
    <property type="glycosylation" value="2 sites, 1 O-linked glycan (1 site)"/>
</dbReference>
<dbReference type="iPTMnet" id="Q9NX46"/>
<dbReference type="MetOSite" id="Q9NX46"/>
<dbReference type="PhosphoSitePlus" id="Q9NX46"/>
<dbReference type="BioMuta" id="ADPRHL2"/>
<dbReference type="DMDM" id="74753038"/>
<dbReference type="jPOST" id="Q9NX46"/>
<dbReference type="MassIVE" id="Q9NX46"/>
<dbReference type="PaxDb" id="9606-ENSP00000362273"/>
<dbReference type="PeptideAtlas" id="Q9NX46"/>
<dbReference type="ProteomicsDB" id="83037"/>
<dbReference type="Pumba" id="Q9NX46"/>
<dbReference type="TopDownProteomics" id="Q9NX46"/>
<dbReference type="Antibodypedia" id="17409">
    <property type="antibodies" value="113 antibodies from 22 providers"/>
</dbReference>
<dbReference type="DNASU" id="54936"/>
<dbReference type="Ensembl" id="ENST00000373178.5">
    <property type="protein sequence ID" value="ENSP00000362273.4"/>
    <property type="gene ID" value="ENSG00000116863.11"/>
</dbReference>
<dbReference type="GeneID" id="54936"/>
<dbReference type="KEGG" id="hsa:54936"/>
<dbReference type="MANE-Select" id="ENST00000373178.5">
    <property type="protein sequence ID" value="ENSP00000362273.4"/>
    <property type="RefSeq nucleotide sequence ID" value="NM_017825.3"/>
    <property type="RefSeq protein sequence ID" value="NP_060295.1"/>
</dbReference>
<dbReference type="UCSC" id="uc001bzt.4">
    <property type="organism name" value="human"/>
</dbReference>
<dbReference type="AGR" id="HGNC:21304"/>
<dbReference type="CTD" id="54936"/>
<dbReference type="DisGeNET" id="54936"/>
<dbReference type="GeneCards" id="ADPRS"/>
<dbReference type="HGNC" id="HGNC:21304">
    <property type="gene designation" value="ADPRS"/>
</dbReference>
<dbReference type="HPA" id="ENSG00000116863">
    <property type="expression patterns" value="Low tissue specificity"/>
</dbReference>
<dbReference type="MalaCards" id="ADPRS"/>
<dbReference type="MIM" id="610624">
    <property type="type" value="gene"/>
</dbReference>
<dbReference type="MIM" id="618170">
    <property type="type" value="phenotype"/>
</dbReference>
<dbReference type="neXtProt" id="NX_Q9NX46"/>
<dbReference type="OpenTargets" id="ENSG00000116863"/>
<dbReference type="VEuPathDB" id="HostDB:ENSG00000116863"/>
<dbReference type="eggNOG" id="ENOG502QUER">
    <property type="taxonomic scope" value="Eukaryota"/>
</dbReference>
<dbReference type="GeneTree" id="ENSGT00390000015369"/>
<dbReference type="HOGENOM" id="CLU_024566_6_0_1"/>
<dbReference type="InParanoid" id="Q9NX46"/>
<dbReference type="OMA" id="HMEHVEA"/>
<dbReference type="OrthoDB" id="410104at2759"/>
<dbReference type="PAN-GO" id="Q9NX46">
    <property type="GO annotations" value="2 GO annotations based on evolutionary models"/>
</dbReference>
<dbReference type="PhylomeDB" id="Q9NX46"/>
<dbReference type="TreeFam" id="TF324754"/>
<dbReference type="BRENDA" id="3.2.1.143">
    <property type="organism ID" value="2681"/>
</dbReference>
<dbReference type="PathwayCommons" id="Q9NX46"/>
<dbReference type="Reactome" id="R-HSA-110362">
    <property type="pathway name" value="POLB-Dependent Long Patch Base Excision Repair"/>
</dbReference>
<dbReference type="SignaLink" id="Q9NX46"/>
<dbReference type="BioGRID-ORCS" id="54936">
    <property type="hits" value="69 hits in 1157 CRISPR screens"/>
</dbReference>
<dbReference type="EvolutionaryTrace" id="Q9NX46"/>
<dbReference type="GeneWiki" id="ADPRHL2"/>
<dbReference type="GenomeRNAi" id="54936"/>
<dbReference type="Pharos" id="Q9NX46">
    <property type="development level" value="Tbio"/>
</dbReference>
<dbReference type="PRO" id="PR:Q9NX46"/>
<dbReference type="Proteomes" id="UP000005640">
    <property type="component" value="Chromosome 1"/>
</dbReference>
<dbReference type="RNAct" id="Q9NX46">
    <property type="molecule type" value="protein"/>
</dbReference>
<dbReference type="Bgee" id="ENSG00000116863">
    <property type="expression patterns" value="Expressed in oviduct epithelium and 187 other cell types or tissues"/>
</dbReference>
<dbReference type="GO" id="GO:0005737">
    <property type="term" value="C:cytoplasm"/>
    <property type="evidence" value="ECO:0000314"/>
    <property type="project" value="UniProtKB"/>
</dbReference>
<dbReference type="GO" id="GO:0005759">
    <property type="term" value="C:mitochondrial matrix"/>
    <property type="evidence" value="ECO:0000304"/>
    <property type="project" value="Reactome"/>
</dbReference>
<dbReference type="GO" id="GO:0005739">
    <property type="term" value="C:mitochondrion"/>
    <property type="evidence" value="ECO:0000314"/>
    <property type="project" value="UniProtKB"/>
</dbReference>
<dbReference type="GO" id="GO:0016604">
    <property type="term" value="C:nuclear body"/>
    <property type="evidence" value="ECO:0000314"/>
    <property type="project" value="HPA"/>
</dbReference>
<dbReference type="GO" id="GO:0005654">
    <property type="term" value="C:nucleoplasm"/>
    <property type="evidence" value="ECO:0000314"/>
    <property type="project" value="HPA"/>
</dbReference>
<dbReference type="GO" id="GO:0005634">
    <property type="term" value="C:nucleus"/>
    <property type="evidence" value="ECO:0000314"/>
    <property type="project" value="UniProtKB"/>
</dbReference>
<dbReference type="GO" id="GO:0090734">
    <property type="term" value="C:site of DNA damage"/>
    <property type="evidence" value="ECO:0000314"/>
    <property type="project" value="UniProtKB"/>
</dbReference>
<dbReference type="GO" id="GO:0140292">
    <property type="term" value="F:ADP-ribosylserine hydrolase activity"/>
    <property type="evidence" value="ECO:0000314"/>
    <property type="project" value="UniProtKB"/>
</dbReference>
<dbReference type="GO" id="GO:0004553">
    <property type="term" value="F:hydrolase activity, hydrolyzing O-glycosyl compounds"/>
    <property type="evidence" value="ECO:0000314"/>
    <property type="project" value="UniProtKB"/>
</dbReference>
<dbReference type="GO" id="GO:0000287">
    <property type="term" value="F:magnesium ion binding"/>
    <property type="evidence" value="ECO:0000314"/>
    <property type="project" value="UniProtKB"/>
</dbReference>
<dbReference type="GO" id="GO:0061463">
    <property type="term" value="F:O-acetyl-ADP-ribose deacetylase activity"/>
    <property type="evidence" value="ECO:0000314"/>
    <property type="project" value="UniProtKB"/>
</dbReference>
<dbReference type="GO" id="GO:0004649">
    <property type="term" value="F:poly(ADP-ribose) glycohydrolase activity"/>
    <property type="evidence" value="ECO:0000314"/>
    <property type="project" value="UniProtKB"/>
</dbReference>
<dbReference type="GO" id="GO:0006287">
    <property type="term" value="P:base-excision repair, gap-filling"/>
    <property type="evidence" value="ECO:0000304"/>
    <property type="project" value="Reactome"/>
</dbReference>
<dbReference type="GO" id="GO:0071451">
    <property type="term" value="P:cellular response to superoxide"/>
    <property type="evidence" value="ECO:0000315"/>
    <property type="project" value="UniProtKB"/>
</dbReference>
<dbReference type="GO" id="GO:0006281">
    <property type="term" value="P:DNA repair"/>
    <property type="evidence" value="ECO:0000315"/>
    <property type="project" value="UniProtKB"/>
</dbReference>
<dbReference type="GO" id="GO:0060546">
    <property type="term" value="P:negative regulation of necroptotic process"/>
    <property type="evidence" value="ECO:0000250"/>
    <property type="project" value="UniProtKB"/>
</dbReference>
<dbReference type="GO" id="GO:0140290">
    <property type="term" value="P:peptidyl-serine ADP-deribosylation"/>
    <property type="evidence" value="ECO:0000314"/>
    <property type="project" value="UniProtKB"/>
</dbReference>
<dbReference type="FunFam" id="1.10.4080.10:FF:000001">
    <property type="entry name" value="ADP-ribose glycohydrolase ARH3"/>
    <property type="match status" value="1"/>
</dbReference>
<dbReference type="Gene3D" id="1.10.4080.10">
    <property type="entry name" value="ADP-ribosylation/Crystallin J1"/>
    <property type="match status" value="1"/>
</dbReference>
<dbReference type="InterPro" id="IPR050792">
    <property type="entry name" value="ADP-ribosylglycohydrolase"/>
</dbReference>
<dbReference type="InterPro" id="IPR005502">
    <property type="entry name" value="Ribosyl_crysJ1"/>
</dbReference>
<dbReference type="InterPro" id="IPR036705">
    <property type="entry name" value="Ribosyl_crysJ1_sf"/>
</dbReference>
<dbReference type="PANTHER" id="PTHR16222">
    <property type="entry name" value="ADP-RIBOSYLGLYCOHYDROLASE"/>
    <property type="match status" value="1"/>
</dbReference>
<dbReference type="PANTHER" id="PTHR16222:SF24">
    <property type="entry name" value="ADP-RIBOSYLHYDROLASE ARH3"/>
    <property type="match status" value="1"/>
</dbReference>
<dbReference type="Pfam" id="PF03747">
    <property type="entry name" value="ADP_ribosyl_GH"/>
    <property type="match status" value="1"/>
</dbReference>
<dbReference type="SUPFAM" id="SSF101478">
    <property type="entry name" value="ADP-ribosylglycohydrolase"/>
    <property type="match status" value="1"/>
</dbReference>
<comment type="function">
    <text evidence="1 4 7 9 10 11 12 13 14 16 17 19 20 21 22 23 24 25">ADP-ribosylhydrolase that preferentially hydrolyzes the scissile alpha-O-linkage attached to the anomeric C1'' position of ADP-ribose and acts on different substrates, such as proteins ADP-ribosylated on serine and threonine, free poly(ADP-ribose) and O-acetyl-ADP-D-ribose (PubMed:21498885, PubMed:29907568, PubMed:30045870, PubMed:30401461, PubMed:30830864, PubMed:33186521, PubMed:33769608, PubMed:33894202, PubMed:34019811, PubMed:34321462, PubMed:34479984, PubMed:34625544). Specifically acts as a serine mono-ADP-ribosylhydrolase by mediating the removal of mono-ADP-ribose attached to serine residues on proteins, thereby playing a key role in DNA damage response (PubMed:28650317, PubMed:29234005, PubMed:30045870, PubMed:33186521, PubMed:34019811, PubMed:34625544). Serine ADP-ribosylation of proteins constitutes the primary form of ADP-ribosylation of proteins in response to DNA damage (PubMed:29480802, PubMed:33186521, PubMed:34625544). Does not hydrolyze ADP-ribosyl-arginine, -cysteine, -diphthamide, or -asparagine bonds (PubMed:16278211, PubMed:33769608). Also able to degrade protein free poly(ADP-ribose), which is synthesized in response to DNA damage: free poly(ADP-ribose) acts as a potent cell death signal and its degradation by ADPRHL2 protects cells from poly(ADP-ribose)-dependent cell death, a process named parthanatos (PubMed:16278211). Also hydrolyzes free poly(ADP-ribose) in mitochondria (PubMed:22433848). Specifically digests O-acetyl-ADP-D-ribose, a product of deacetylation reactions catalyzed by sirtuins (PubMed:17075046, PubMed:21498885). Specifically degrades 1''-O-acetyl-ADP-D-ribose isomer, rather than 2''-O-acetyl-ADP-D-ribose or 3''-O-acetyl-ADP-D-ribose isomers (PubMed:21498885).</text>
</comment>
<comment type="catalytic activity">
    <reaction evidence="1 4 9">
        <text>[(1''-&gt;2')-ADP-alpha-D-ribose](n) + H2O = [(1''-&gt;2')-ADP-alpha-D-ribose](n-1) + ADP-D-ribose</text>
        <dbReference type="Rhea" id="RHEA:52216"/>
        <dbReference type="Rhea" id="RHEA-COMP:16922"/>
        <dbReference type="Rhea" id="RHEA-COMP:16923"/>
        <dbReference type="ChEBI" id="CHEBI:15377"/>
        <dbReference type="ChEBI" id="CHEBI:57967"/>
        <dbReference type="ChEBI" id="CHEBI:142512"/>
        <dbReference type="EC" id="3.2.1.143"/>
    </reaction>
    <physiologicalReaction direction="left-to-right" evidence="1 4 9">
        <dbReference type="Rhea" id="RHEA:52217"/>
    </physiologicalReaction>
</comment>
<comment type="catalytic activity">
    <reaction evidence="4 7">
        <text>1''-O-acetyl-ADP-alpha-D-ribose + H2O = ADP-D-ribose + acetate + H(+)</text>
        <dbReference type="Rhea" id="RHEA:58112"/>
        <dbReference type="ChEBI" id="CHEBI:15377"/>
        <dbReference type="ChEBI" id="CHEBI:15378"/>
        <dbReference type="ChEBI" id="CHEBI:30089"/>
        <dbReference type="ChEBI" id="CHEBI:57967"/>
        <dbReference type="ChEBI" id="CHEBI:142511"/>
    </reaction>
    <physiologicalReaction direction="left-to-right" evidence="4 7">
        <dbReference type="Rhea" id="RHEA:58113"/>
    </physiologicalReaction>
</comment>
<comment type="catalytic activity">
    <reaction evidence="10 11 19 25">
        <text>O-(ADP-D-ribosyl)-L-seryl-[protein] + H2O = ADP-D-ribose + L-seryl-[protein]</text>
        <dbReference type="Rhea" id="RHEA:58256"/>
        <dbReference type="Rhea" id="RHEA-COMP:9863"/>
        <dbReference type="Rhea" id="RHEA-COMP:15091"/>
        <dbReference type="ChEBI" id="CHEBI:15377"/>
        <dbReference type="ChEBI" id="CHEBI:29999"/>
        <dbReference type="ChEBI" id="CHEBI:57967"/>
        <dbReference type="ChEBI" id="CHEBI:142556"/>
    </reaction>
    <physiologicalReaction direction="left-to-right" evidence="10 11 19 25">
        <dbReference type="Rhea" id="RHEA:58257"/>
    </physiologicalReaction>
</comment>
<comment type="catalytic activity">
    <reaction evidence="18 23">
        <text>alpha-NAD(+) + H2O = ADP-D-ribose + nicotinamide + H(+)</text>
        <dbReference type="Rhea" id="RHEA:68792"/>
        <dbReference type="ChEBI" id="CHEBI:15377"/>
        <dbReference type="ChEBI" id="CHEBI:15378"/>
        <dbReference type="ChEBI" id="CHEBI:17154"/>
        <dbReference type="ChEBI" id="CHEBI:57967"/>
        <dbReference type="ChEBI" id="CHEBI:77017"/>
    </reaction>
</comment>
<comment type="cofactor">
    <cofactor evidence="1 4 5 13 14 21">
        <name>Mg(2+)</name>
        <dbReference type="ChEBI" id="CHEBI:18420"/>
    </cofactor>
    <text evidence="1 5 13 14 21">Binds 2 magnesium ions per subunit.</text>
</comment>
<comment type="activity regulation">
    <text evidence="13 14 23">The protein undergoes a dramatic conformational switch from closed to open states upon substrate-binding, which enables specific substrate recognition for the 1''-O-linkage (PubMed:29907568, PubMed:34321462). The glutamate flap (Glu-41) blocks substrate entrance to Mg(2+) in the unliganded closed state (PubMed:29907568, PubMed:30045870, PubMed:34321462). In presence of substrate, Glu-41 is ejected from the active site: this closed-to-open transition significantly widens the substrate-binding channel and precisely positions the scissile 1''-O-linkage for cleavage while securing tightly 2'- and 3'-hydroxyls of ADP-ribose (PubMed:29907568, PubMed:30045870, PubMed:34321462).</text>
</comment>
<comment type="subunit">
    <text evidence="2 3">Monomer.</text>
</comment>
<comment type="interaction">
    <interactant intactId="EBI-718580">
        <id>Q9NX46</id>
    </interactant>
    <interactant intactId="EBI-12859340">
        <id>Q9NQX1-2</id>
        <label>PRDM5</label>
    </interactant>
    <organismsDiffer>false</organismsDiffer>
    <experiments>3</experiments>
</comment>
<comment type="interaction">
    <interactant intactId="EBI-718580">
        <id>Q9NX46</id>
    </interactant>
    <interactant intactId="EBI-1105254">
        <id>O95271</id>
        <label>TNKS</label>
    </interactant>
    <organismsDiffer>false</organismsDiffer>
    <experiments>3</experiments>
</comment>
<comment type="subcellular location">
    <subcellularLocation>
        <location evidence="6 24">Nucleus</location>
    </subcellularLocation>
    <subcellularLocation>
        <location evidence="1 24">Cytoplasm</location>
    </subcellularLocation>
    <subcellularLocation>
        <location evidence="14">Chromosome</location>
    </subcellularLocation>
    <subcellularLocation>
        <location evidence="6 24 29">Mitochondrion matrix</location>
    </subcellularLocation>
    <text evidence="14">Recruited to DNA lesion regions following DNA damage; ADP-D-ribose-recognition is required for recruitment to DNA damage sites.</text>
</comment>
<comment type="tissue specificity">
    <text evidence="1 17">Ubiquitous (PubMed:16278211). Expressed in skin fibroblasts (PubMed:30830864).</text>
</comment>
<comment type="disease" evidence="15 16 17 22 24">
    <disease id="DI-05374">
        <name>Neurodegeneration, childhood-onset, stress-induced, with variable ataxia and seizures</name>
        <acronym>CONDSIAS</acronym>
        <description>An autosomal recessive neurodegenerative disorder characterized by pediatric onset of progressive brain atrophy, developmental regression, and seizures in association with periods of stress, such as infections.</description>
        <dbReference type="MIM" id="618170"/>
    </disease>
    <text>The disease is caused by variants affecting the gene represented in this entry.</text>
</comment>
<comment type="similarity">
    <text evidence="28">Belongs to the ADP-ribosylglycohydrolase family.</text>
</comment>
<comment type="sequence caution" evidence="28">
    <conflict type="frameshift">
        <sequence resource="EMBL-CDS" id="AAK14922"/>
    </conflict>
</comment>
<accession>Q9NX46</accession>
<accession>Q53G94</accession>
<accession>Q6IAB8</accession>
<accession>Q9BY47</accession>
<feature type="chain" id="PRO_0000277613" description="ADP-ribosylhydrolase ARH3">
    <location>
        <begin position="1"/>
        <end position="363"/>
    </location>
</feature>
<feature type="binding site" evidence="8 13 14 32 33 34">
    <location>
        <position position="41"/>
    </location>
    <ligand>
        <name>Mg(2+)</name>
        <dbReference type="ChEBI" id="CHEBI:18420"/>
        <label>2</label>
    </ligand>
</feature>
<feature type="binding site" evidence="8 13 14 21 32 33 34 40">
    <location>
        <position position="76"/>
    </location>
    <ligand>
        <name>Mg(2+)</name>
        <dbReference type="ChEBI" id="CHEBI:18420"/>
        <label>1</label>
    </ligand>
</feature>
<feature type="binding site" evidence="8 13 14 21 23 32 33 34 35 36 37 40">
    <location>
        <position position="77"/>
    </location>
    <ligand>
        <name>Mg(2+)</name>
        <dbReference type="ChEBI" id="CHEBI:18420"/>
        <label>1</label>
    </ligand>
</feature>
<feature type="binding site" evidence="13 14 32 33 34">
    <location>
        <position position="77"/>
    </location>
    <ligand>
        <name>substrate</name>
    </ligand>
</feature>
<feature type="binding site" evidence="8 13 14 21 23 32 33 34 35 36 37 40">
    <location>
        <position position="78"/>
    </location>
    <ligand>
        <name>Mg(2+)</name>
        <dbReference type="ChEBI" id="CHEBI:18420"/>
        <label>1</label>
    </ligand>
</feature>
<feature type="binding site" evidence="23 37">
    <location>
        <position position="78"/>
    </location>
    <ligand>
        <name>Mg(2+)</name>
        <dbReference type="ChEBI" id="CHEBI:18420"/>
        <label>2</label>
    </ligand>
</feature>
<feature type="binding site" evidence="13 14 32 33 34">
    <location>
        <begin position="146"/>
        <end position="152"/>
    </location>
    <ligand>
        <name>substrate</name>
    </ligand>
</feature>
<feature type="binding site" evidence="13 14 32 33 34">
    <location>
        <position position="182"/>
    </location>
    <ligand>
        <name>substrate</name>
    </ligand>
</feature>
<feature type="binding site" evidence="13 33 34">
    <location>
        <position position="235"/>
    </location>
    <ligand>
        <name>substrate</name>
    </ligand>
</feature>
<feature type="binding site" evidence="13 33 34">
    <location>
        <position position="271"/>
    </location>
    <ligand>
        <name>substrate</name>
    </ligand>
</feature>
<feature type="binding site" evidence="8 13 14 21 23 32 33 34 35 36 37 39">
    <location>
        <position position="314"/>
    </location>
    <ligand>
        <name>Mg(2+)</name>
        <dbReference type="ChEBI" id="CHEBI:18420"/>
        <label>2</label>
    </ligand>
</feature>
<feature type="binding site" evidence="8 13 14 21 23 32 33 34 35 36 37 40">
    <location>
        <position position="316"/>
    </location>
    <ligand>
        <name>Mg(2+)</name>
        <dbReference type="ChEBI" id="CHEBI:18420"/>
        <label>1</label>
    </ligand>
</feature>
<feature type="binding site" evidence="8 13 14 21 23 32 33 34 35 36 37 39">
    <location>
        <position position="316"/>
    </location>
    <ligand>
        <name>Mg(2+)</name>
        <dbReference type="ChEBI" id="CHEBI:18420"/>
        <label>2</label>
    </ligand>
</feature>
<feature type="binding site" evidence="8 13 14 21 32 33 34 39">
    <location>
        <position position="317"/>
    </location>
    <ligand>
        <name>Mg(2+)</name>
        <dbReference type="ChEBI" id="CHEBI:18420"/>
        <label>2</label>
    </ligand>
</feature>
<feature type="site" description="Glutamate flap" evidence="13 14">
    <location>
        <position position="41"/>
    </location>
</feature>
<feature type="modified residue" description="Phosphothreonine" evidence="41">
    <location>
        <position position="64"/>
    </location>
</feature>
<feature type="sequence variant" id="VAR_085654" description="In CONDSIAS; uncertain significance; reduced protein abundance; increased levels of ADP-ribose; May result in protein misfolding or aggregation." evidence="22 24">
    <original>C</original>
    <variation>F</variation>
    <location>
        <position position="26"/>
    </location>
</feature>
<feature type="sequence variant" id="VAR_081264" description="In CONDSIAS; uncertain significance; dbSNP:rs1557732234." evidence="15">
    <original>D</original>
    <variation>N</variation>
    <location>
        <position position="34"/>
    </location>
</feature>
<feature type="sequence variant" id="VAR_081265" description="In CONDSIAS; severely reduced protein levels in patient fibroblasts; decreased stability and reduced Tm; reduced alpha-helix content and altered secondary structure detected by circular dichroism spectroscopy; dbSNP:rs1557733311." evidence="15">
    <original>T</original>
    <variation>P</variation>
    <location>
        <position position="79"/>
    </location>
</feature>
<feature type="sequence variant" id="VAR_081266" description="In CONDSIAS; no detectable protein in patient fibroblasts." evidence="15">
    <location>
        <begin position="106"/>
        <end position="363"/>
    </location>
</feature>
<feature type="sequence variant" id="VAR_081267" description="In CONDSIAS; uncertain significance; dbSNP:rs200626873." evidence="15">
    <original>S</original>
    <variation>L</variation>
    <location>
        <position position="177"/>
    </location>
</feature>
<feature type="sequence variant" id="VAR_030579" description="In dbSNP:rs2236387." evidence="26">
    <original>E</original>
    <variation>K</variation>
    <location>
        <position position="209"/>
    </location>
</feature>
<feature type="sequence variant" id="VAR_081268" description="In CONDSIAS; no detectable protein levels in patient fibroblasts." evidence="16">
    <original>KI</original>
    <variation>N</variation>
    <location>
        <begin position="248"/>
        <end position="249"/>
    </location>
</feature>
<feature type="sequence variant" id="VAR_081269" description="In CONDSIAS; no detectable protein in patient fibroblasts." evidence="15">
    <location>
        <begin position="334"/>
        <end position="363"/>
    </location>
</feature>
<feature type="sequence variant" id="VAR_081270" description="In CONDSIAS; uncertain significance; results in accumulation of poly(ADP-ribose) in the nucleus of patient cells after exposure to H(2)O(2); reduced protein abundance in fibroblasts; localization to the cytoplasm in fibroblasts; no effect on hydrolase activity in vitro; may result in reduced protein stability; dbSNP:rs201735454." evidence="16 24">
    <original>V</original>
    <variation>G</variation>
    <location>
        <position position="335"/>
    </location>
</feature>
<feature type="sequence variant" id="VAR_081271" description="In CONDSIAS; uncertain significance." evidence="16">
    <location>
        <begin position="346"/>
        <end position="363"/>
    </location>
</feature>
<feature type="mutagenesis site" description="Reduces hydrolase activity." evidence="23">
    <original>D</original>
    <variation>G</variation>
    <location>
        <position position="34"/>
    </location>
</feature>
<feature type="mutagenesis site" description="Significant loss of activity. Does not affect recruitment to DNA lesion regions following DNA damage. Strongly reduced ability to hydrolyze proteins ADP-ribosylated on serine." evidence="3 11 14 23">
    <original>E</original>
    <variation>A</variation>
    <variation>Q</variation>
    <location>
        <position position="41"/>
    </location>
</feature>
<feature type="mutagenesis site" description="Abolishes hydrolase activity." evidence="23">
    <original>T</original>
    <variation>R</variation>
    <location>
        <position position="76"/>
    </location>
</feature>
<feature type="mutagenesis site" description="Retains ability to bind proteins ADP-ribosylated on serine but is unable to hydrolyze them." evidence="11">
    <original>DD</original>
    <variation>AA</variation>
    <location>
        <begin position="77"/>
        <end position="78"/>
    </location>
</feature>
<feature type="mutagenesis site" description="Complete loss of activity." evidence="1 4 10">
    <original>DD</original>
    <variation>NN</variation>
    <location>
        <begin position="77"/>
        <end position="78"/>
    </location>
</feature>
<feature type="mutagenesis site" description="Complete loss of activity. Abolishes Mg(2+) binding. Retains ability to bind ADP-ribose. Does not affect recruitment to DNA lesion regions following DNA damage. Strongly reduced ability to hydrolyze proteins ADP-ribosylated on serine." evidence="3 10 11 14 18 20 21 22 23 24">
    <original>D</original>
    <variation>N</variation>
    <variation>A</variation>
    <location>
        <position position="77"/>
    </location>
</feature>
<feature type="mutagenesis site" description="Abolishes hydrolase activity." evidence="21">
    <original>D</original>
    <variation>A</variation>
    <location>
        <position position="78"/>
    </location>
</feature>
<feature type="mutagenesis site" description="Complete loss of activity." evidence="10 18 20 22 23 24">
    <original>D</original>
    <variation>N</variation>
    <location>
        <position position="78"/>
    </location>
</feature>
<feature type="mutagenesis site" description="Abolished ability to bind and hydrolyze proteins ADP-ribosylated on serine. No effect on hydrolase activity." evidence="11 23">
    <original>G</original>
    <variation>D</variation>
    <location>
        <position position="115"/>
    </location>
</feature>
<feature type="mutagenesis site" description="Abolishes hydrolase activity." evidence="23">
    <original>F</original>
    <variation>L</variation>
    <location>
        <position position="143"/>
    </location>
</feature>
<feature type="mutagenesis site" description="Complete loss of activity. Abolished recruitment to DNA lesion regions following DNA damage. Abolished ability to hydrolyze proteins ADP-ribosylated on serine." evidence="3 11 14 23">
    <original>S</original>
    <variation>A</variation>
    <location>
        <position position="148"/>
    </location>
</feature>
<feature type="mutagenesis site" description="Significant loss of activity. Abolished recruitment to DNA lesion regions following DNA damage. Abolished ability to hydrolyze proteins ADP-ribosylated on serine." evidence="3 11 14">
    <original>Y</original>
    <variation>A</variation>
    <location>
        <position position="149"/>
    </location>
</feature>
<feature type="mutagenesis site" description="No effect on hydrolase activity." evidence="23">
    <original>Y</original>
    <variation>L</variation>
    <location>
        <position position="149"/>
    </location>
</feature>
<feature type="mutagenesis site" description="Reduces hydrolase activity." evidence="23">
    <original>G</original>
    <variation>E</variation>
    <location>
        <position position="150"/>
    </location>
</feature>
<feature type="mutagenesis site" description="Partial loss of activity." evidence="3">
    <original>N</original>
    <variation>A</variation>
    <location>
        <position position="151"/>
    </location>
</feature>
<feature type="mutagenesis site" description="Complete loss of activity. Abolished recruitment to DNA lesion regions following DNA damage. Abolished ability to hydrolyze proteins ADP-ribosylated on serine." evidence="3 11 14">
    <original>H</original>
    <variation>Q</variation>
    <variation>A</variation>
    <location>
        <position position="182"/>
    </location>
</feature>
<feature type="mutagenesis site" description="No effect on hydrolase activity." evidence="23">
    <original>S</original>
    <variation>P</variation>
    <location>
        <position position="185"/>
    </location>
</feature>
<feature type="mutagenesis site" description="No effect on hydrolase activity." evidence="23">
    <original>L</original>
    <variation>V</variation>
    <location>
        <position position="186"/>
    </location>
</feature>
<feature type="mutagenesis site" description="Slight reduction in activity toward poly(ADP-ribose). Does not affect ability to degrade O-acetyl-ADP-D-ribose." evidence="1 4">
    <original>EE</original>
    <variation>QQ</variation>
    <location>
        <begin position="238"/>
        <end position="239"/>
    </location>
</feature>
<feature type="mutagenesis site" description="Slight reduction in activity toward poly(ADP-ribose). Does not affect ability to degrade O-acetyl-ADP-D-ribose." evidence="1 4">
    <original>EE</original>
    <variation>QQ</variation>
    <location>
        <begin position="261"/>
        <end position="262"/>
    </location>
</feature>
<feature type="mutagenesis site" description="No effect on hydrolase activity." evidence="23">
    <original>N</original>
    <variation>A</variation>
    <location>
        <position position="269"/>
    </location>
</feature>
<feature type="mutagenesis site" description="No effect on hydrolase activity." evidence="23">
    <original>G</original>
    <variation>C</variation>
    <location>
        <position position="270"/>
    </location>
</feature>
<feature type="mutagenesis site" description="No effect on hydrolase activity." evidence="23">
    <original>I</original>
    <variation>A</variation>
    <location>
        <position position="271"/>
    </location>
</feature>
<feature type="mutagenesis site" description="Complete loss of activity. Abolishes Mg(2+) and ADP-ribose binding. Does not affect recruitment to DNA lesion regions following DNA damage. Retains ability to bind proteins ADP-ribosylated on serine but is unable to hydrolyze them." evidence="3 11 13 14 21">
    <original>D</original>
    <variation>A</variation>
    <variation>E</variation>
    <location>
        <position position="314"/>
    </location>
</feature>
<feature type="mutagenesis site" description="Significant loss of activity." evidence="3">
    <original>D</original>
    <variation>N</variation>
    <location>
        <position position="314"/>
    </location>
</feature>
<feature type="mutagenesis site" description="Abolishes hydrolase activity." evidence="21">
    <original>D</original>
    <variation>A</variation>
    <location>
        <position position="316"/>
    </location>
</feature>
<feature type="mutagenesis site" description="Complete loss of activity. Does not affect recruitment to DNA lesion regions following DNA damage. Retains ability to bind proteins ADP-ribosylated on serine but is unable to hydrolyze them." evidence="3 11 14">
    <original>T</original>
    <variation>A</variation>
    <location>
        <position position="317"/>
    </location>
</feature>
<feature type="mutagenesis site" description="Partial loss of activity." evidence="3">
    <original>T</original>
    <variation>S</variation>
    <location>
        <position position="317"/>
    </location>
</feature>
<feature type="sequence conflict" description="In Ref. 4; CAG33518." evidence="28" ref="4">
    <original>K</original>
    <variation>E</variation>
    <location>
        <position position="109"/>
    </location>
</feature>
<feature type="helix" evidence="45">
    <location>
        <begin position="19"/>
        <end position="42"/>
    </location>
</feature>
<feature type="helix" evidence="45">
    <location>
        <begin position="48"/>
        <end position="53"/>
    </location>
</feature>
<feature type="helix" evidence="45">
    <location>
        <begin position="54"/>
        <end position="58"/>
    </location>
</feature>
<feature type="strand" evidence="44">
    <location>
        <begin position="62"/>
        <end position="64"/>
    </location>
</feature>
<feature type="helix" evidence="45">
    <location>
        <begin position="77"/>
        <end position="92"/>
    </location>
</feature>
<feature type="helix" evidence="45">
    <location>
        <begin position="97"/>
        <end position="110"/>
    </location>
</feature>
<feature type="turn" evidence="43">
    <location>
        <begin position="113"/>
        <end position="115"/>
    </location>
</feature>
<feature type="helix" evidence="45">
    <location>
        <begin position="120"/>
        <end position="127"/>
    </location>
</feature>
<feature type="helix" evidence="45">
    <location>
        <begin position="137"/>
        <end position="145"/>
    </location>
</feature>
<feature type="helix" evidence="45">
    <location>
        <begin position="152"/>
        <end position="155"/>
    </location>
</feature>
<feature type="helix" evidence="45">
    <location>
        <begin position="158"/>
        <end position="163"/>
    </location>
</feature>
<feature type="helix" evidence="45">
    <location>
        <begin position="167"/>
        <end position="179"/>
    </location>
</feature>
<feature type="helix" evidence="45">
    <location>
        <begin position="185"/>
        <end position="201"/>
    </location>
</feature>
<feature type="helix" evidence="45">
    <location>
        <begin position="208"/>
        <end position="223"/>
    </location>
</feature>
<feature type="helix" evidence="45">
    <location>
        <begin position="226"/>
        <end position="234"/>
    </location>
</feature>
<feature type="helix" evidence="45">
    <location>
        <begin position="241"/>
        <end position="253"/>
    </location>
</feature>
<feature type="strand" evidence="42">
    <location>
        <begin position="255"/>
        <end position="257"/>
    </location>
</feature>
<feature type="helix" evidence="45">
    <location>
        <begin position="260"/>
        <end position="267"/>
    </location>
</feature>
<feature type="strand" evidence="45">
    <location>
        <begin position="270"/>
        <end position="272"/>
    </location>
</feature>
<feature type="helix" evidence="45">
    <location>
        <begin position="273"/>
        <end position="275"/>
    </location>
</feature>
<feature type="helix" evidence="45">
    <location>
        <begin position="277"/>
        <end position="286"/>
    </location>
</feature>
<feature type="helix" evidence="45">
    <location>
        <begin position="300"/>
        <end position="310"/>
    </location>
</feature>
<feature type="helix" evidence="45">
    <location>
        <begin position="315"/>
        <end position="330"/>
    </location>
</feature>
<feature type="helix" evidence="45">
    <location>
        <begin position="332"/>
        <end position="334"/>
    </location>
</feature>
<feature type="helix" evidence="45">
    <location>
        <begin position="337"/>
        <end position="340"/>
    </location>
</feature>
<feature type="helix" evidence="45">
    <location>
        <begin position="346"/>
        <end position="360"/>
    </location>
</feature>
<sequence>MAAAAMAAAAGGGAGAARSLSRFRGCLAGALLGDCVGSFYEAHDTVDLTSVLRHVQSLEPDPGTPGSERTEALYYTDDTAMARALVQSLLAKEAFDEVDMAHRFAQEYKKDPDRGYGAGVVTVFKKLLNPKCRDVFEPARAQFNGKGSYGNGGAMRVAGISLAYSSVQDVQKFARLSAQLTHASSLGYNGAILQALAVHLALQGESSSEHFLKQLLGHMEDLEGDAQSVLDARELGMEERPYSSRLKKIGELLDQASVTREEVVSELGNGIAAFESVPTAIYCFLRCMEPDPEIPSAFNSLQRTLIYSISLGGDTDTIATMAGAIAGAYYGMDQVPESWQQSCEGYEETDILAQSLHRVFQKS</sequence>
<organism>
    <name type="scientific">Homo sapiens</name>
    <name type="common">Human</name>
    <dbReference type="NCBI Taxonomy" id="9606"/>
    <lineage>
        <taxon>Eukaryota</taxon>
        <taxon>Metazoa</taxon>
        <taxon>Chordata</taxon>
        <taxon>Craniata</taxon>
        <taxon>Vertebrata</taxon>
        <taxon>Euteleostomi</taxon>
        <taxon>Mammalia</taxon>
        <taxon>Eutheria</taxon>
        <taxon>Euarchontoglires</taxon>
        <taxon>Primates</taxon>
        <taxon>Haplorrhini</taxon>
        <taxon>Catarrhini</taxon>
        <taxon>Hominidae</taxon>
        <taxon>Homo</taxon>
    </lineage>
</organism>
<reference key="1">
    <citation type="journal article" date="2002" name="Protein Sci.">
        <title>The family of toxin-related ecto-ADP-ribosyltransferases in humans and the mouse.</title>
        <authorList>
            <person name="Glowacki G."/>
            <person name="Braren R."/>
            <person name="Firner K."/>
            <person name="Nissen M."/>
            <person name="Kuehl M."/>
            <person name="Reche P."/>
            <person name="Bazan J.F."/>
            <person name="Cetkovic-Cvrlje M."/>
            <person name="Leiter E."/>
            <person name="Haag F."/>
            <person name="Koch-Nolte F."/>
        </authorList>
    </citation>
    <scope>NUCLEOTIDE SEQUENCE [GENOMIC DNA / MRNA]</scope>
</reference>
<reference key="2">
    <citation type="submission" date="1999-12" db="EMBL/GenBank/DDBJ databases">
        <title>A novel gene expressed in human liver cancer tissue.</title>
        <authorList>
            <person name="Li Y."/>
            <person name="Wu T."/>
            <person name="Xu S."/>
            <person name="Ren S."/>
            <person name="Chen Z."/>
            <person name="Han Z."/>
        </authorList>
    </citation>
    <scope>NUCLEOTIDE SEQUENCE [LARGE SCALE MRNA]</scope>
    <source>
        <tissue>Liver cancer</tissue>
    </source>
</reference>
<reference key="3">
    <citation type="journal article" date="2004" name="Nat. Genet.">
        <title>Complete sequencing and characterization of 21,243 full-length human cDNAs.</title>
        <authorList>
            <person name="Ota T."/>
            <person name="Suzuki Y."/>
            <person name="Nishikawa T."/>
            <person name="Otsuki T."/>
            <person name="Sugiyama T."/>
            <person name="Irie R."/>
            <person name="Wakamatsu A."/>
            <person name="Hayashi K."/>
            <person name="Sato H."/>
            <person name="Nagai K."/>
            <person name="Kimura K."/>
            <person name="Makita H."/>
            <person name="Sekine M."/>
            <person name="Obayashi M."/>
            <person name="Nishi T."/>
            <person name="Shibahara T."/>
            <person name="Tanaka T."/>
            <person name="Ishii S."/>
            <person name="Yamamoto J."/>
            <person name="Saito K."/>
            <person name="Kawai Y."/>
            <person name="Isono Y."/>
            <person name="Nakamura Y."/>
            <person name="Nagahari K."/>
            <person name="Murakami K."/>
            <person name="Yasuda T."/>
            <person name="Iwayanagi T."/>
            <person name="Wagatsuma M."/>
            <person name="Shiratori A."/>
            <person name="Sudo H."/>
            <person name="Hosoiri T."/>
            <person name="Kaku Y."/>
            <person name="Kodaira H."/>
            <person name="Kondo H."/>
            <person name="Sugawara M."/>
            <person name="Takahashi M."/>
            <person name="Kanda K."/>
            <person name="Yokoi T."/>
            <person name="Furuya T."/>
            <person name="Kikkawa E."/>
            <person name="Omura Y."/>
            <person name="Abe K."/>
            <person name="Kamihara K."/>
            <person name="Katsuta N."/>
            <person name="Sato K."/>
            <person name="Tanikawa M."/>
            <person name="Yamazaki M."/>
            <person name="Ninomiya K."/>
            <person name="Ishibashi T."/>
            <person name="Yamashita H."/>
            <person name="Murakawa K."/>
            <person name="Fujimori K."/>
            <person name="Tanai H."/>
            <person name="Kimata M."/>
            <person name="Watanabe M."/>
            <person name="Hiraoka S."/>
            <person name="Chiba Y."/>
            <person name="Ishida S."/>
            <person name="Ono Y."/>
            <person name="Takiguchi S."/>
            <person name="Watanabe S."/>
            <person name="Yosida M."/>
            <person name="Hotuta T."/>
            <person name="Kusano J."/>
            <person name="Kanehori K."/>
            <person name="Takahashi-Fujii A."/>
            <person name="Hara H."/>
            <person name="Tanase T.-O."/>
            <person name="Nomura Y."/>
            <person name="Togiya S."/>
            <person name="Komai F."/>
            <person name="Hara R."/>
            <person name="Takeuchi K."/>
            <person name="Arita M."/>
            <person name="Imose N."/>
            <person name="Musashino K."/>
            <person name="Yuuki H."/>
            <person name="Oshima A."/>
            <person name="Sasaki N."/>
            <person name="Aotsuka S."/>
            <person name="Yoshikawa Y."/>
            <person name="Matsunawa H."/>
            <person name="Ichihara T."/>
            <person name="Shiohata N."/>
            <person name="Sano S."/>
            <person name="Moriya S."/>
            <person name="Momiyama H."/>
            <person name="Satoh N."/>
            <person name="Takami S."/>
            <person name="Terashima Y."/>
            <person name="Suzuki O."/>
            <person name="Nakagawa S."/>
            <person name="Senoh A."/>
            <person name="Mizoguchi H."/>
            <person name="Goto Y."/>
            <person name="Shimizu F."/>
            <person name="Wakebe H."/>
            <person name="Hishigaki H."/>
            <person name="Watanabe T."/>
            <person name="Sugiyama A."/>
            <person name="Takemoto M."/>
            <person name="Kawakami B."/>
            <person name="Yamazaki M."/>
            <person name="Watanabe K."/>
            <person name="Kumagai A."/>
            <person name="Itakura S."/>
            <person name="Fukuzumi Y."/>
            <person name="Fujimori Y."/>
            <person name="Komiyama M."/>
            <person name="Tashiro H."/>
            <person name="Tanigami A."/>
            <person name="Fujiwara T."/>
            <person name="Ono T."/>
            <person name="Yamada K."/>
            <person name="Fujii Y."/>
            <person name="Ozaki K."/>
            <person name="Hirao M."/>
            <person name="Ohmori Y."/>
            <person name="Kawabata A."/>
            <person name="Hikiji T."/>
            <person name="Kobatake N."/>
            <person name="Inagaki H."/>
            <person name="Ikema Y."/>
            <person name="Okamoto S."/>
            <person name="Okitani R."/>
            <person name="Kawakami T."/>
            <person name="Noguchi S."/>
            <person name="Itoh T."/>
            <person name="Shigeta K."/>
            <person name="Senba T."/>
            <person name="Matsumura K."/>
            <person name="Nakajima Y."/>
            <person name="Mizuno T."/>
            <person name="Morinaga M."/>
            <person name="Sasaki M."/>
            <person name="Togashi T."/>
            <person name="Oyama M."/>
            <person name="Hata H."/>
            <person name="Watanabe M."/>
            <person name="Komatsu T."/>
            <person name="Mizushima-Sugano J."/>
            <person name="Satoh T."/>
            <person name="Shirai Y."/>
            <person name="Takahashi Y."/>
            <person name="Nakagawa K."/>
            <person name="Okumura K."/>
            <person name="Nagase T."/>
            <person name="Nomura N."/>
            <person name="Kikuchi H."/>
            <person name="Masuho Y."/>
            <person name="Yamashita R."/>
            <person name="Nakai K."/>
            <person name="Yada T."/>
            <person name="Nakamura Y."/>
            <person name="Ohara O."/>
            <person name="Isogai T."/>
            <person name="Sugano S."/>
        </authorList>
    </citation>
    <scope>NUCLEOTIDE SEQUENCE [LARGE SCALE MRNA]</scope>
</reference>
<reference key="4">
    <citation type="submission" date="2004-06" db="EMBL/GenBank/DDBJ databases">
        <title>Cloning of human full open reading frames in Gateway(TM) system entry vector (pDONR201).</title>
        <authorList>
            <person name="Ebert L."/>
            <person name="Schick M."/>
            <person name="Neubert P."/>
            <person name="Schatten R."/>
            <person name="Henze S."/>
            <person name="Korn B."/>
        </authorList>
    </citation>
    <scope>NUCLEOTIDE SEQUENCE [LARGE SCALE MRNA]</scope>
</reference>
<reference key="5">
    <citation type="submission" date="2005-04" db="EMBL/GenBank/DDBJ databases">
        <authorList>
            <person name="Suzuki Y."/>
            <person name="Sugano S."/>
            <person name="Totoki Y."/>
            <person name="Toyoda A."/>
            <person name="Takeda T."/>
            <person name="Sakaki Y."/>
            <person name="Tanaka A."/>
            <person name="Yokoyama S."/>
        </authorList>
    </citation>
    <scope>NUCLEOTIDE SEQUENCE [LARGE SCALE MRNA]</scope>
    <scope>VARIANT LYS-209</scope>
    <source>
        <tissue>Thyroid</tissue>
    </source>
</reference>
<reference key="6">
    <citation type="journal article" date="2006" name="Nature">
        <title>The DNA sequence and biological annotation of human chromosome 1.</title>
        <authorList>
            <person name="Gregory S.G."/>
            <person name="Barlow K.F."/>
            <person name="McLay K.E."/>
            <person name="Kaul R."/>
            <person name="Swarbreck D."/>
            <person name="Dunham A."/>
            <person name="Scott C.E."/>
            <person name="Howe K.L."/>
            <person name="Woodfine K."/>
            <person name="Spencer C.C.A."/>
            <person name="Jones M.C."/>
            <person name="Gillson C."/>
            <person name="Searle S."/>
            <person name="Zhou Y."/>
            <person name="Kokocinski F."/>
            <person name="McDonald L."/>
            <person name="Evans R."/>
            <person name="Phillips K."/>
            <person name="Atkinson A."/>
            <person name="Cooper R."/>
            <person name="Jones C."/>
            <person name="Hall R.E."/>
            <person name="Andrews T.D."/>
            <person name="Lloyd C."/>
            <person name="Ainscough R."/>
            <person name="Almeida J.P."/>
            <person name="Ambrose K.D."/>
            <person name="Anderson F."/>
            <person name="Andrew R.W."/>
            <person name="Ashwell R.I.S."/>
            <person name="Aubin K."/>
            <person name="Babbage A.K."/>
            <person name="Bagguley C.L."/>
            <person name="Bailey J."/>
            <person name="Beasley H."/>
            <person name="Bethel G."/>
            <person name="Bird C.P."/>
            <person name="Bray-Allen S."/>
            <person name="Brown J.Y."/>
            <person name="Brown A.J."/>
            <person name="Buckley D."/>
            <person name="Burton J."/>
            <person name="Bye J."/>
            <person name="Carder C."/>
            <person name="Chapman J.C."/>
            <person name="Clark S.Y."/>
            <person name="Clarke G."/>
            <person name="Clee C."/>
            <person name="Cobley V."/>
            <person name="Collier R.E."/>
            <person name="Corby N."/>
            <person name="Coville G.J."/>
            <person name="Davies J."/>
            <person name="Deadman R."/>
            <person name="Dunn M."/>
            <person name="Earthrowl M."/>
            <person name="Ellington A.G."/>
            <person name="Errington H."/>
            <person name="Frankish A."/>
            <person name="Frankland J."/>
            <person name="French L."/>
            <person name="Garner P."/>
            <person name="Garnett J."/>
            <person name="Gay L."/>
            <person name="Ghori M.R.J."/>
            <person name="Gibson R."/>
            <person name="Gilby L.M."/>
            <person name="Gillett W."/>
            <person name="Glithero R.J."/>
            <person name="Grafham D.V."/>
            <person name="Griffiths C."/>
            <person name="Griffiths-Jones S."/>
            <person name="Grocock R."/>
            <person name="Hammond S."/>
            <person name="Harrison E.S.I."/>
            <person name="Hart E."/>
            <person name="Haugen E."/>
            <person name="Heath P.D."/>
            <person name="Holmes S."/>
            <person name="Holt K."/>
            <person name="Howden P.J."/>
            <person name="Hunt A.R."/>
            <person name="Hunt S.E."/>
            <person name="Hunter G."/>
            <person name="Isherwood J."/>
            <person name="James R."/>
            <person name="Johnson C."/>
            <person name="Johnson D."/>
            <person name="Joy A."/>
            <person name="Kay M."/>
            <person name="Kershaw J.K."/>
            <person name="Kibukawa M."/>
            <person name="Kimberley A.M."/>
            <person name="King A."/>
            <person name="Knights A.J."/>
            <person name="Lad H."/>
            <person name="Laird G."/>
            <person name="Lawlor S."/>
            <person name="Leongamornlert D.A."/>
            <person name="Lloyd D.M."/>
            <person name="Loveland J."/>
            <person name="Lovell J."/>
            <person name="Lush M.J."/>
            <person name="Lyne R."/>
            <person name="Martin S."/>
            <person name="Mashreghi-Mohammadi M."/>
            <person name="Matthews L."/>
            <person name="Matthews N.S.W."/>
            <person name="McLaren S."/>
            <person name="Milne S."/>
            <person name="Mistry S."/>
            <person name="Moore M.J.F."/>
            <person name="Nickerson T."/>
            <person name="O'Dell C.N."/>
            <person name="Oliver K."/>
            <person name="Palmeiri A."/>
            <person name="Palmer S.A."/>
            <person name="Parker A."/>
            <person name="Patel D."/>
            <person name="Pearce A.V."/>
            <person name="Peck A.I."/>
            <person name="Pelan S."/>
            <person name="Phelps K."/>
            <person name="Phillimore B.J."/>
            <person name="Plumb R."/>
            <person name="Rajan J."/>
            <person name="Raymond C."/>
            <person name="Rouse G."/>
            <person name="Saenphimmachak C."/>
            <person name="Sehra H.K."/>
            <person name="Sheridan E."/>
            <person name="Shownkeen R."/>
            <person name="Sims S."/>
            <person name="Skuce C.D."/>
            <person name="Smith M."/>
            <person name="Steward C."/>
            <person name="Subramanian S."/>
            <person name="Sycamore N."/>
            <person name="Tracey A."/>
            <person name="Tromans A."/>
            <person name="Van Helmond Z."/>
            <person name="Wall M."/>
            <person name="Wallis J.M."/>
            <person name="White S."/>
            <person name="Whitehead S.L."/>
            <person name="Wilkinson J.E."/>
            <person name="Willey D.L."/>
            <person name="Williams H."/>
            <person name="Wilming L."/>
            <person name="Wray P.W."/>
            <person name="Wu Z."/>
            <person name="Coulson A."/>
            <person name="Vaudin M."/>
            <person name="Sulston J.E."/>
            <person name="Durbin R.M."/>
            <person name="Hubbard T."/>
            <person name="Wooster R."/>
            <person name="Dunham I."/>
            <person name="Carter N.P."/>
            <person name="McVean G."/>
            <person name="Ross M.T."/>
            <person name="Harrow J."/>
            <person name="Olson M.V."/>
            <person name="Beck S."/>
            <person name="Rogers J."/>
            <person name="Bentley D.R."/>
        </authorList>
    </citation>
    <scope>NUCLEOTIDE SEQUENCE [LARGE SCALE GENOMIC DNA]</scope>
</reference>
<reference key="7">
    <citation type="journal article" date="2004" name="Genome Res.">
        <title>The status, quality, and expansion of the NIH full-length cDNA project: the Mammalian Gene Collection (MGC).</title>
        <authorList>
            <consortium name="The MGC Project Team"/>
        </authorList>
    </citation>
    <scope>NUCLEOTIDE SEQUENCE [LARGE SCALE MRNA]</scope>
    <source>
        <tissue>Skin</tissue>
    </source>
</reference>
<reference key="8">
    <citation type="journal article" date="2006" name="J. Biol. Chem.">
        <title>Identification and characterization of a mammalian 39-kDa poly(ADP-ribose) glycohydrolase.</title>
        <authorList>
            <person name="Oka S."/>
            <person name="Kato J."/>
            <person name="Moss J."/>
        </authorList>
    </citation>
    <scope>FUNCTION</scope>
    <scope>TISSUE SPECIFICITY</scope>
    <scope>SUBCELLULAR LOCATION</scope>
    <scope>COFACTOR</scope>
    <scope>MUTAGENESIS OF 77-ASP--ASP-78; 238-GLU--GLU-239 AND 261-GLU--GLU-262</scope>
</reference>
<reference key="9">
    <citation type="journal article" date="2006" name="Proc. Natl. Acad. Sci. U.S.A.">
        <title>The 39-kDa poly(ADP-ribose) glycohydrolase ARH3 hydrolyzes O-acetyl-ADP-ribose, a product of the Sir2 family of acetyl-histone deacetylases.</title>
        <authorList>
            <person name="Ono T."/>
            <person name="Kasamatsu A."/>
            <person name="Oka S."/>
            <person name="Moss J."/>
        </authorList>
    </citation>
    <scope>FUNCTION</scope>
    <scope>CATALYTIC ACTIVITY</scope>
    <scope>COFACTOR</scope>
    <scope>MUTAGENESIS OF 77-ASP-ASP-78; 261-GLU-GLU-262 AND 238-GLU-GLN-239</scope>
</reference>
<reference key="10">
    <citation type="journal article" date="2008" name="Mol. Cell. Biol.">
        <title>Functional localization of two poly(ADP-ribose)-degrading enzymes to the mitochondrial matrix.</title>
        <authorList>
            <person name="Niere M."/>
            <person name="Kernstock S."/>
            <person name="Koch-Nolte F."/>
            <person name="Ziegler M."/>
        </authorList>
    </citation>
    <scope>SUBCELLULAR LOCATION</scope>
</reference>
<reference key="11">
    <citation type="journal article" date="2011" name="BMC Syst. Biol.">
        <title>Initial characterization of the human central proteome.</title>
        <authorList>
            <person name="Burkard T.R."/>
            <person name="Planyavsky M."/>
            <person name="Kaupe I."/>
            <person name="Breitwieser F.P."/>
            <person name="Buerckstuemmer T."/>
            <person name="Bennett K.L."/>
            <person name="Superti-Furga G."/>
            <person name="Colinge J."/>
        </authorList>
    </citation>
    <scope>IDENTIFICATION BY MASS SPECTROMETRY [LARGE SCALE ANALYSIS]</scope>
</reference>
<reference key="12">
    <citation type="journal article" date="2011" name="J. Biol. Chem.">
        <title>Hydrolysis of O-acetyl-ADP-ribose isomers by ADP-ribosylhydrolase 3.</title>
        <authorList>
            <person name="Kasamatsu A."/>
            <person name="Nakao M."/>
            <person name="Smith B.C."/>
            <person name="Comstock L.R."/>
            <person name="Ono T."/>
            <person name="Kato J."/>
            <person name="Denu J.M."/>
            <person name="Moss J."/>
        </authorList>
    </citation>
    <scope>FUNCTION</scope>
    <scope>CATALYTIC ACTIVITY</scope>
</reference>
<reference key="13">
    <citation type="journal article" date="2012" name="J. Biol. Chem.">
        <title>ADP-ribosylhydrolase 3 (ARH3), not poly(ADP-ribose) glycohydrolase (PARG) isoforms, is responsible for degradation of mitochondrial matrix-associated poly(ADP-ribose).</title>
        <authorList>
            <person name="Niere M."/>
            <person name="Mashimo M."/>
            <person name="Agledal L."/>
            <person name="Dolle C."/>
            <person name="Kasamatsu A."/>
            <person name="Kato J."/>
            <person name="Moss J."/>
            <person name="Ziegler M."/>
        </authorList>
    </citation>
    <scope>FUNCTION</scope>
    <scope>CATALYTIC ACTIVITY</scope>
    <scope>SUBCELLULAR LOCATION</scope>
</reference>
<reference key="14">
    <citation type="journal article" date="2012" name="Mol. Cell. Proteomics">
        <title>Comparative large-scale characterisation of plant vs. mammal proteins reveals similar and idiosyncratic N-alpha acetylation features.</title>
        <authorList>
            <person name="Bienvenut W.V."/>
            <person name="Sumpton D."/>
            <person name="Martinez A."/>
            <person name="Lilla S."/>
            <person name="Espagne C."/>
            <person name="Meinnel T."/>
            <person name="Giglione C."/>
        </authorList>
    </citation>
    <scope>IDENTIFICATION BY MASS SPECTROMETRY [LARGE SCALE ANALYSIS]</scope>
</reference>
<reference key="15">
    <citation type="journal article" date="2012" name="Proc. Natl. Acad. Sci. U.S.A.">
        <title>N-terminal acetylome analyses and functional insights of the N-terminal acetyltransferase NatB.</title>
        <authorList>
            <person name="Van Damme P."/>
            <person name="Lasa M."/>
            <person name="Polevoda B."/>
            <person name="Gazquez C."/>
            <person name="Elosegui-Artola A."/>
            <person name="Kim D.S."/>
            <person name="De Juan-Pardo E."/>
            <person name="Demeyer K."/>
            <person name="Hole K."/>
            <person name="Larrea E."/>
            <person name="Timmerman E."/>
            <person name="Prieto J."/>
            <person name="Arnesen T."/>
            <person name="Sherman F."/>
            <person name="Gevaert K."/>
            <person name="Aldabe R."/>
        </authorList>
    </citation>
    <scope>IDENTIFICATION BY MASS SPECTROMETRY [LARGE SCALE ANALYSIS]</scope>
</reference>
<reference key="16">
    <citation type="journal article" date="2013" name="J. Proteome Res.">
        <title>Toward a comprehensive characterization of a human cancer cell phosphoproteome.</title>
        <authorList>
            <person name="Zhou H."/>
            <person name="Di Palma S."/>
            <person name="Preisinger C."/>
            <person name="Peng M."/>
            <person name="Polat A.N."/>
            <person name="Heck A.J."/>
            <person name="Mohammed S."/>
        </authorList>
    </citation>
    <scope>PHOSPHORYLATION [LARGE SCALE ANALYSIS] AT THR-64</scope>
    <scope>IDENTIFICATION BY MASS SPECTROMETRY [LARGE SCALE ANALYSIS]</scope>
    <source>
        <tissue>Erythroleukemia</tissue>
    </source>
</reference>
<reference key="17">
    <citation type="journal article" date="2017" name="Elife">
        <title>Serine ADP-ribosylation reversal by the hydrolase ARH3.</title>
        <authorList>
            <person name="Fontana P."/>
            <person name="Bonfiglio J.J."/>
            <person name="Palazzo L."/>
            <person name="Bartlett E."/>
            <person name="Matic I."/>
            <person name="Ahel I."/>
        </authorList>
    </citation>
    <scope>FUNCTION</scope>
    <scope>CATALYTIC ACTIVITY</scope>
    <scope>MUTAGENESIS OF ASP-77; 77-ASP--ASP-78 AND ASP-78</scope>
</reference>
<reference key="18">
    <citation type="journal article" date="2017" name="Nat. Commun.">
        <title>Proteomic analyses identify ARH3 as a serine mono-ADP-ribosylhydrolase.</title>
        <authorList>
            <person name="Abplanalp J."/>
            <person name="Leutert M."/>
            <person name="Frugier E."/>
            <person name="Nowak K."/>
            <person name="Feurer R."/>
            <person name="Kato J."/>
            <person name="Kistemaker H.V.A."/>
            <person name="Filippov D.V."/>
            <person name="Moss J."/>
            <person name="Caflisch A."/>
            <person name="Hottiger M.O."/>
        </authorList>
    </citation>
    <scope>FUNCTION</scope>
    <scope>CATALYTIC ACTIVITY</scope>
    <scope>MUTAGENESIS OF GLU-41; ASP-77; 77-ASP-ASP-78; GLY-115; SER-148; TYR-149; HIS-182; ASP-314 AND THR-317</scope>
</reference>
<reference key="19">
    <citation type="journal article" date="2018" name="Elife">
        <title>Serine is the major residue for ADP-ribosylation upon DNA damage.</title>
        <authorList>
            <person name="Palazzo L."/>
            <person name="Leidecker O."/>
            <person name="Prokhorova E."/>
            <person name="Dauben H."/>
            <person name="Matic I."/>
            <person name="Ahel I."/>
        </authorList>
    </citation>
    <scope>FUNCTION</scope>
</reference>
<reference key="20">
    <citation type="journal article" date="2019" name="ACS Chem. Biol.">
        <title>The ARH and Macrodomain Families of alpha-ADP-ribose-acceptor Hydrolases Catalyze alpha-NAD+ Hydrolysis.</title>
        <authorList>
            <person name="Stevens L.A."/>
            <person name="Kato J."/>
            <person name="Kasamatsu A."/>
            <person name="Oda H."/>
            <person name="Lee D.Y."/>
            <person name="Moss J."/>
        </authorList>
    </citation>
    <scope>CATALYTIC ACTIVITY</scope>
    <scope>MUTAGENESIS OF ASP-77 AND ASP-78</scope>
</reference>
<reference key="21">
    <citation type="journal article" date="2019" name="JCI Insight">
        <title>PARP1 inhibition alleviates injury in ARH3-deficient mice and human cells.</title>
        <authorList>
            <person name="Mashimo M."/>
            <person name="Bu X."/>
            <person name="Aoyama K."/>
            <person name="Kato J."/>
            <person name="Ishiwata-Endo H."/>
            <person name="Stevens L.A."/>
            <person name="Kasamatsu A."/>
            <person name="Wolfe L.A."/>
            <person name="Toro C."/>
            <person name="Adams D."/>
            <person name="Markello T."/>
            <person name="Gahl W.A."/>
            <person name="Moss J."/>
        </authorList>
    </citation>
    <scope>FUNCTION</scope>
    <scope>TISSUE SPECIFICITY</scope>
    <scope>INVOLVEMENT IN CONDSIAS</scope>
</reference>
<reference key="22">
    <citation type="journal article" date="2021" name="Chemistry">
        <title>Molecular Tools for the Study of ADP-Ribosylation: A Unified and Versatile Method to Synthesise Native Mono-ADP-Ribosylated Peptides.</title>
        <authorList>
            <person name="Voorneveld J."/>
            <person name="Rack J.G.M."/>
            <person name="van Gijlswijk L."/>
            <person name="Meeuwenoord N.J."/>
            <person name="Liu Q."/>
            <person name="Overkleeft H.S."/>
            <person name="van der Marel G.A."/>
            <person name="Ahel I."/>
            <person name="Filippov D.V."/>
        </authorList>
    </citation>
    <scope>FUNCTION</scope>
    <scope>MUTAGENESIS OF ASP-77 AND ASP-78</scope>
</reference>
<reference key="23">
    <citation type="journal article" date="2006" name="Proc. Natl. Acad. Sci. U.S.A.">
        <title>The structure of human ADP-ribosylhydrolase 3 (ARH3) provides insights into the reversibility of protein ADP-ribosylation.</title>
        <authorList>
            <person name="Mueller-Dieckmann C."/>
            <person name="Kernstock S."/>
            <person name="Lisurek M."/>
            <person name="von Kries J.P."/>
            <person name="Haag F."/>
            <person name="Weiss M.S."/>
            <person name="Koch-Nolte F."/>
        </authorList>
    </citation>
    <scope>X-RAY CRYSTALLOGRAPHY (1.6 ANGSTROMS) OF 19-363</scope>
    <scope>SUBUNIT</scope>
    <scope>MUTAGENESIS OF GLU-41; ASP-77; SER-148; TYR-149; ASN-151; HIS-182; ASP-314 AND THR-317</scope>
</reference>
<reference key="24">
    <citation type="journal article" date="2011" name="Nature">
        <title>The structure and catalytic mechanism of a poly(ADP-ribose) glycohydrolase.</title>
        <authorList>
            <person name="Slade D."/>
            <person name="Dunstan M.S."/>
            <person name="Barkauskaite E."/>
            <person name="Weston R."/>
            <person name="Lafite P."/>
            <person name="Dixon N."/>
            <person name="Ahel M."/>
            <person name="Leys D."/>
            <person name="Ahel I."/>
        </authorList>
    </citation>
    <scope>X-RAY CRYSTALLOGRAPHY (1.82 ANGSTROMS) OF 19-363</scope>
    <scope>SUBSTRATE-BINDING SITE</scope>
    <scope>METAL-BINDING SITES</scope>
</reference>
<reference key="25">
    <citation type="journal article" date="2020" name="Cell">
        <title>An HPF1/PARP1-based chemical biology strategy for exploring ADP-ribosylation.</title>
        <authorList>
            <person name="Bonfiglio J.J."/>
            <person name="Leidecker O."/>
            <person name="Dauben H."/>
            <person name="Longarini E.J."/>
            <person name="Colby T."/>
            <person name="San Segundo-Acosta P."/>
            <person name="Perez K.A."/>
            <person name="Matic I."/>
        </authorList>
    </citation>
    <scope>FUNCTION</scope>
    <scope>CATALYTIC ACTIVITY</scope>
</reference>
<reference key="26">
    <citation type="journal article" date="2021" name="Nat. Commun.">
        <title>The regulatory landscape of the human HPF1- and ARH3-dependent ADP-ribosylome.</title>
        <authorList>
            <person name="Hendriks I.A."/>
            <person name="Buch-Larsen S.C."/>
            <person name="Prokhorova E."/>
            <person name="Elsborg J.D."/>
            <person name="Rebak A.K.L.F.S."/>
            <person name="Zhu K."/>
            <person name="Ahel D."/>
            <person name="Lukas C."/>
            <person name="Ahel I."/>
            <person name="Nielsen M.L."/>
        </authorList>
    </citation>
    <scope>FUNCTION</scope>
    <scope>CATALYTIC ACTIVITY</scope>
</reference>
<reference key="27">
    <citation type="journal article" date="2006" name="Acta Crystallogr. F">
        <title>Cloning, expression, purification, crystallization and preliminary X-ray diffraction analysis of human ARH3, the first eukaryotic protein-ADP-ribosylhydrolase.</title>
        <authorList>
            <person name="Kernstock S."/>
            <person name="Koch-Nolte F."/>
            <person name="Mueller-Dieckmann J."/>
            <person name="Weiss M.S."/>
            <person name="Mueller-Dieckmann C."/>
        </authorList>
    </citation>
    <scope>PRELIMINARY X-RAY CRYSTALLOGRAPHY (1.13 ANGSTROMS) OF 18-363 IN COMPLEX WITH ADP</scope>
    <scope>SUBUNIT</scope>
</reference>
<reference evidence="31" key="28">
    <citation type="journal article" date="2007" name="Acta Crystallogr. D">
        <title>On the routine use of soft X-rays in macromolecular crystallography. Part IV. Efficient determination of anomalous substructures in biomacromolecules using longer X-ray wavelengths.</title>
        <authorList>
            <person name="Mueller-Dieckmann C."/>
            <person name="Panjikar S."/>
            <person name="Schmidt A."/>
            <person name="Mueller S."/>
            <person name="Kuper J."/>
            <person name="Geerlof A."/>
            <person name="Wilmanns M."/>
            <person name="Singh R.K."/>
            <person name="Tucker P.A."/>
            <person name="Weiss M.S."/>
        </authorList>
    </citation>
    <scope>X-RAY CRYSTALLOGRAPHY (1.82 ANGSTROMS) OF 18-363 IN COMPLEX WITH MAGNESIUM</scope>
    <scope>COFACTOR</scope>
</reference>
<reference evidence="32" key="29">
    <citation type="journal article" date="2018" name="J. Biol. Chem.">
        <title>Structure-function analyses reveal the mechanism of the ARH3-dependent hydrolysis of ADP-ribosylation.</title>
        <authorList>
            <person name="Wang M."/>
            <person name="Yuan Z."/>
            <person name="Xie R."/>
            <person name="Ma Y."/>
            <person name="Liu X."/>
            <person name="Yu X."/>
        </authorList>
    </citation>
    <scope>X-RAY CRYSTALLOGRAPHY (1.58 ANGSTROMS) OF 19-363 IN COMPLEX WITH MAGNESIUM AND ADP-RIBOSE</scope>
    <scope>FUNCTION</scope>
    <scope>COFACTOR</scope>
    <scope>ACTIVITY REGULATION</scope>
    <scope>SUBCELLULAR LOCATION</scope>
    <scope>MUTAGENESIS OF GLU-41; ASP-77; SER-148; TYR-149; HIS-182; ASP-314 AND THR-317</scope>
</reference>
<reference evidence="33 34" key="30">
    <citation type="journal article" date="2018" name="J. Biol. Chem.">
        <title>Structure of human ADP-ribosyl-acceptor hydrolase 3 bound to ADP-ribose reveals a conformational switch that enables specific substrate recognition.</title>
        <authorList>
            <person name="Pourfarjam Y."/>
            <person name="Ventura J."/>
            <person name="Kurinov I."/>
            <person name="Cho A."/>
            <person name="Moss J."/>
            <person name="Kim I.K."/>
        </authorList>
    </citation>
    <scope>X-RAY CRYSTALLOGRAPHY (1.60 ANGSTROMS) IN COMPLEX WITH MAGNESIUM AND ADP-RIBOSE</scope>
    <scope>FUNCTION</scope>
    <scope>SUBSTRATE SPECIFICITY</scope>
    <scope>ACTIVITY REGULATION</scope>
    <scope>COFACTOR</scope>
    <scope>MUTAGENESIS OF ASP-314</scope>
</reference>
<reference evidence="38 39 40" key="31">
    <citation type="journal article" date="2021" name="J. Biol. Chem.">
        <title>Structural and biochemical analysis of human ADP-ribosyl-acceptor hydrolase 3 reveals the basis of metal selectivity and different roles for the two magnesium ions.</title>
        <authorList>
            <person name="Pourfarjam Y."/>
            <person name="Ma Z."/>
            <person name="Kurinov I."/>
            <person name="Moss J."/>
            <person name="Kim I.K."/>
        </authorList>
    </citation>
    <scope>X-RAY CRYSTALLOGRAPHY (1.75 ANGSTROMS) IN COMPLEX WITH MAGNESIUM AND ADP-RIBOSE</scope>
    <scope>FUNCTION</scope>
    <scope>COFACTOR</scope>
    <scope>MUTAGENESIS OF ASP-77; ASP-78; ASP-314 AND ASP-316</scope>
</reference>
<reference evidence="35 36 37" key="32">
    <citation type="journal article" date="2021" name="Nat. Commun.">
        <title>Mechanistic insights into the three steps of poly(ADP-ribosylation) reversal.</title>
        <authorList>
            <person name="Rack J.G.M."/>
            <person name="Liu Q."/>
            <person name="Zorzini V."/>
            <person name="Voorneveld J."/>
            <person name="Ariza A."/>
            <person name="Honarmand Ebrahimi K."/>
            <person name="Reber J.M."/>
            <person name="Krassnig S.C."/>
            <person name="Ahel D."/>
            <person name="van der Marel G.A."/>
            <person name="Mangerich A."/>
            <person name="McCullagh J.S.O."/>
            <person name="Filippov D.V."/>
            <person name="Ahel I."/>
        </authorList>
    </citation>
    <scope>X-RAY CRYSTALLOGRAPHY (1.31 ANGSTROMS) OF 19-363 OF VARIANT ALA-41 IN COMPLEX WITH ADP-RIBOSE; HISTONE 2B AND NAD</scope>
    <scope>FUNCTION</scope>
    <scope>CATALYTIC ACTIVITY</scope>
    <scope>ACTIVITY REGULATION</scope>
    <scope>MUTAGENESIS OF ASP-34; GLU-41; THR-76; ASP-77; ASP-78; GLY-115; PHE-143; SER-148; TYR-149; GLY-150; SER-185; LEU-186; ASN-269; GLY-270 AND ILE-271</scope>
</reference>
<reference key="33">
    <citation type="journal article" date="2018" name="Am. J. Hum. Genet.">
        <title>Biallelic mutations in ADPRHL2, encoding ADP-ribosylhydrolase 3, lead to a degenerative pediatric stress-induced epileptic ataxia syndrome.</title>
        <authorList>
            <person name="Ghosh S.G."/>
            <person name="Becker K."/>
            <person name="Huang H."/>
            <person name="Dixon-Salazar T."/>
            <person name="Chai G."/>
            <person name="Salpietro V."/>
            <person name="Al-Gazali L."/>
            <person name="Waisfisz Q."/>
            <person name="Wang H."/>
            <person name="Vaux K.K."/>
            <person name="Stanley V."/>
            <person name="Manole A."/>
            <person name="Akpulat U."/>
            <person name="Weiss M.M."/>
            <person name="Efthymiou S."/>
            <person name="Hanna M.G."/>
            <person name="Minetti C."/>
            <person name="Striano P."/>
            <person name="Pisciotta L."/>
            <person name="De Grandis E."/>
            <person name="Altmueller J."/>
            <person name="Nuernberg P."/>
            <person name="Thiele H."/>
            <person name="Yis U."/>
            <person name="Okur T.D."/>
            <person name="Polat A.I."/>
            <person name="Amiri N."/>
            <person name="Doosti M."/>
            <person name="Karimani E.G."/>
            <person name="Toosi M.B."/>
            <person name="Haddad G."/>
            <person name="Karakaya M."/>
            <person name="Wirth B."/>
            <person name="van Hagen J.M."/>
            <person name="Wolf N.I."/>
            <person name="Maroofian R."/>
            <person name="Houlden H."/>
            <person name="Cirak S."/>
            <person name="Gleeson J.G."/>
        </authorList>
    </citation>
    <scope>INVOLVEMENT IN CONDSIAS</scope>
    <scope>VARIANTS CONDSIAS ASN-34; PRO-79; 106-GLN--SER-363 DEL; LEU-177 AND 334-GLN--SER-363 DEL</scope>
    <scope>CHARACTERIZATION OF VARIANTS CONDSIAS PRO-79; 106-GLN--SER-363 DEL AND 334-GLN--SER-363 DEL</scope>
</reference>
<reference key="34">
    <citation type="journal article" date="2018" name="Am. J. Hum. Genet.">
        <title>Bi-allelic ADPRHL2 mutations cause neurodegeneration with developmental delay, ataxia, and axonal neuropathy.</title>
        <authorList>
            <person name="Danhauser K."/>
            <person name="Alhaddad B."/>
            <person name="Makowski C."/>
            <person name="Piekutowska-Abramczuk D."/>
            <person name="Syrbe S."/>
            <person name="Gomez-Ospina N."/>
            <person name="Manning M.A."/>
            <person name="Kostera-Pruszczyk A."/>
            <person name="Krahn-Peper C."/>
            <person name="Berutti R."/>
            <person name="Kovacs-Nagy R."/>
            <person name="Gusic M."/>
            <person name="Graf E."/>
            <person name="Laugwitz L."/>
            <person name="Roeblitz M."/>
            <person name="Wroblewski A."/>
            <person name="Hartmann H."/>
            <person name="Das A.M."/>
            <person name="Bueltmann E."/>
            <person name="Fang F."/>
            <person name="Xu M."/>
            <person name="Schatz U.A."/>
            <person name="Karall D."/>
            <person name="Zellner H."/>
            <person name="Haberlandt E."/>
            <person name="Feichtinger R.G."/>
            <person name="Mayr J.A."/>
            <person name="Meitinger T."/>
            <person name="Prokisch H."/>
            <person name="Strom T.M."/>
            <person name="Ploski R."/>
            <person name="Hoffmann G.F."/>
            <person name="Pronicki M."/>
            <person name="Bonnen P.E."/>
            <person name="Morlot S."/>
            <person name="Haack T.B."/>
        </authorList>
    </citation>
    <scope>INVOLVEMENT IN CONDSIAS</scope>
    <scope>VARIANTS CONDSIAS 248-LYS-ILE-249 DELINS ASN; GLY-335 AND 346-TYR--SER-363 DEL</scope>
    <scope>FUNCTION</scope>
    <scope>CHARACTERIZATION OF VARIANTS CONDSIAS 248-LYS-ILE-249 DELINS ASN AND GLY-335</scope>
</reference>
<reference key="35">
    <citation type="journal article" date="2021" name="Life. Sci Alliance">
        <title>Biallelic ADPRHL2 mutations in complex neuropathy affect ADP ribosylation and DNA damage response.</title>
        <authorList>
            <person name="Beijer D."/>
            <person name="Agnew T."/>
            <person name="Rack J.G.M."/>
            <person name="Prokhorova E."/>
            <person name="Deconinck T."/>
            <person name="Ceulemans B."/>
            <person name="Peric S."/>
            <person name="Milic Rasic V."/>
            <person name="De Jonghe P."/>
            <person name="Ahel I."/>
            <person name="Baets J."/>
        </authorList>
    </citation>
    <scope>CHARACTERIZATION OF VARIANTS CONDSIAS PHE-26 AND GLY-335</scope>
    <scope>FUNCTION</scope>
    <scope>SUBCELLULAR LOCATION</scope>
    <scope>MUTAGENESIS OF ASP-77 AND ASP-78</scope>
</reference>
<reference key="36">
    <citation type="journal article" date="2021" name="Mol. Cell">
        <title>Unrestrained poly-ADP-ribosylation provides insights into chromatin regulation and human disease.</title>
        <authorList>
            <person name="Prokhorova E."/>
            <person name="Agnew T."/>
            <person name="Wondisford A.R."/>
            <person name="Tellier M."/>
            <person name="Kaminski N."/>
            <person name="Beijer D."/>
            <person name="Holder J."/>
            <person name="Groslambert J."/>
            <person name="Suskiewicz M.J."/>
            <person name="Zhu K."/>
            <person name="Reber J.M."/>
            <person name="Krassnig S.C."/>
            <person name="Palazzo L."/>
            <person name="Murphy S."/>
            <person name="Nielsen M.L."/>
            <person name="Mangerich A."/>
            <person name="Ahel D."/>
            <person name="Baets J."/>
            <person name="O'Sullivan R.J."/>
            <person name="Ahel I."/>
        </authorList>
    </citation>
    <scope>VARIANT CONDSIAS PHE-26</scope>
    <scope>FUNCTION</scope>
    <scope>MUTAGENESIS OF ASP-77 AND ASP-78</scope>
</reference>